<feature type="chain" id="PRO_0000315215" description="RAS guanyl-releasing protein 4">
    <location>
        <begin position="1"/>
        <end position="678"/>
    </location>
</feature>
<feature type="domain" description="N-terminal Ras-GEF" evidence="4">
    <location>
        <begin position="49"/>
        <end position="175"/>
    </location>
</feature>
<feature type="domain" description="Ras-GEF" evidence="5">
    <location>
        <begin position="201"/>
        <end position="432"/>
    </location>
</feature>
<feature type="domain" description="EF-hand" evidence="7">
    <location>
        <begin position="466"/>
        <end position="501"/>
    </location>
</feature>
<feature type="zinc finger region" description="Phorbol-ester/DAG-type" evidence="6">
    <location>
        <begin position="540"/>
        <end position="595"/>
    </location>
</feature>
<feature type="region of interest" description="Disordered" evidence="8">
    <location>
        <begin position="1"/>
        <end position="33"/>
    </location>
</feature>
<feature type="region of interest" description="Disordered" evidence="8">
    <location>
        <begin position="165"/>
        <end position="185"/>
    </location>
</feature>
<feature type="region of interest" description="Disordered" evidence="8">
    <location>
        <begin position="598"/>
        <end position="620"/>
    </location>
</feature>
<feature type="region of interest" description="Disordered" evidence="8">
    <location>
        <begin position="651"/>
        <end position="678"/>
    </location>
</feature>
<feature type="compositionally biased region" description="Basic residues" evidence="8">
    <location>
        <begin position="1"/>
        <end position="10"/>
    </location>
</feature>
<feature type="compositionally biased region" description="Basic residues" evidence="8">
    <location>
        <begin position="20"/>
        <end position="32"/>
    </location>
</feature>
<feature type="compositionally biased region" description="Pro residues" evidence="8">
    <location>
        <begin position="605"/>
        <end position="619"/>
    </location>
</feature>
<feature type="sequence conflict" description="In Ref. 1; AAL76251." evidence="11" ref="1">
    <original>E</original>
    <variation>EK</variation>
    <location>
        <position position="472"/>
    </location>
</feature>
<reference key="1">
    <citation type="journal article" date="2002" name="Mol. Immunol.">
        <title>Cloning of rat Ras guanine nucleotide releasing protein 4, and evaluation of its expression in rat mast cells and their bone marrow progenitors.</title>
        <authorList>
            <person name="Li L."/>
            <person name="Yang Y."/>
            <person name="Stevens R.L."/>
        </authorList>
    </citation>
    <scope>NUCLEOTIDE SEQUENCE [MRNA]</scope>
    <scope>TISSUE SPECIFICITY</scope>
    <source>
        <strain>Sprague-Dawley</strain>
    </source>
</reference>
<reference key="2">
    <citation type="journal article" date="2003" name="J. Biol. Chem.">
        <title>RasGRP4 regulates the expression of prostaglandin D2 in human and rat mast cell lines.</title>
        <authorList>
            <person name="Li L."/>
            <person name="Yang Y."/>
            <person name="Stevens R.L."/>
        </authorList>
    </citation>
    <scope>FUNCTION</scope>
</reference>
<accession>Q8R5I4</accession>
<accession>Q8R5I3</accession>
<name>GRP4_RAT</name>
<evidence type="ECO:0000250" key="1"/>
<evidence type="ECO:0000250" key="2">
    <source>
        <dbReference type="UniProtKB" id="Q8BTM9"/>
    </source>
</evidence>
<evidence type="ECO:0000250" key="3">
    <source>
        <dbReference type="UniProtKB" id="Q8TDF6"/>
    </source>
</evidence>
<evidence type="ECO:0000255" key="4">
    <source>
        <dbReference type="PROSITE-ProRule" id="PRU00135"/>
    </source>
</evidence>
<evidence type="ECO:0000255" key="5">
    <source>
        <dbReference type="PROSITE-ProRule" id="PRU00168"/>
    </source>
</evidence>
<evidence type="ECO:0000255" key="6">
    <source>
        <dbReference type="PROSITE-ProRule" id="PRU00226"/>
    </source>
</evidence>
<evidence type="ECO:0000255" key="7">
    <source>
        <dbReference type="PROSITE-ProRule" id="PRU00448"/>
    </source>
</evidence>
<evidence type="ECO:0000256" key="8">
    <source>
        <dbReference type="SAM" id="MobiDB-lite"/>
    </source>
</evidence>
<evidence type="ECO:0000269" key="9">
    <source>
    </source>
</evidence>
<evidence type="ECO:0000269" key="10">
    <source>
    </source>
</evidence>
<evidence type="ECO:0000305" key="11"/>
<protein>
    <recommendedName>
        <fullName>RAS guanyl-releasing protein 4</fullName>
    </recommendedName>
</protein>
<dbReference type="EMBL" id="AF465263">
    <property type="protein sequence ID" value="AAL76250.1"/>
    <property type="molecule type" value="mRNA"/>
</dbReference>
<dbReference type="EMBL" id="AF465264">
    <property type="protein sequence ID" value="AAL76251.1"/>
    <property type="molecule type" value="mRNA"/>
</dbReference>
<dbReference type="RefSeq" id="NP_570837.2">
    <property type="nucleotide sequence ID" value="NM_130824.2"/>
</dbReference>
<dbReference type="SMR" id="Q8R5I4"/>
<dbReference type="FunCoup" id="Q8R5I4">
    <property type="interactions" value="446"/>
</dbReference>
<dbReference type="STRING" id="10116.ENSRNOP00000046440"/>
<dbReference type="PhosphoSitePlus" id="Q8R5I4"/>
<dbReference type="PaxDb" id="10116-ENSRNOP00000046440"/>
<dbReference type="GeneID" id="170668"/>
<dbReference type="KEGG" id="rno:170668"/>
<dbReference type="UCSC" id="RGD:620476">
    <property type="organism name" value="rat"/>
</dbReference>
<dbReference type="AGR" id="RGD:620476"/>
<dbReference type="CTD" id="115727"/>
<dbReference type="RGD" id="620476">
    <property type="gene designation" value="Rasgrp4"/>
</dbReference>
<dbReference type="eggNOG" id="KOG3417">
    <property type="taxonomic scope" value="Eukaryota"/>
</dbReference>
<dbReference type="InParanoid" id="Q8R5I4"/>
<dbReference type="PhylomeDB" id="Q8R5I4"/>
<dbReference type="Reactome" id="R-RNO-5673001">
    <property type="pathway name" value="RAF/MAP kinase cascade"/>
</dbReference>
<dbReference type="PRO" id="PR:Q8R5I4"/>
<dbReference type="Proteomes" id="UP000002494">
    <property type="component" value="Unplaced"/>
</dbReference>
<dbReference type="GO" id="GO:0009898">
    <property type="term" value="C:cytoplasmic side of plasma membrane"/>
    <property type="evidence" value="ECO:0000250"/>
    <property type="project" value="UniProtKB"/>
</dbReference>
<dbReference type="GO" id="GO:0005829">
    <property type="term" value="C:cytosol"/>
    <property type="evidence" value="ECO:0000250"/>
    <property type="project" value="UniProtKB"/>
</dbReference>
<dbReference type="GO" id="GO:0016020">
    <property type="term" value="C:membrane"/>
    <property type="evidence" value="ECO:0000266"/>
    <property type="project" value="RGD"/>
</dbReference>
<dbReference type="GO" id="GO:0005886">
    <property type="term" value="C:plasma membrane"/>
    <property type="evidence" value="ECO:0000318"/>
    <property type="project" value="GO_Central"/>
</dbReference>
<dbReference type="GO" id="GO:0005509">
    <property type="term" value="F:calcium ion binding"/>
    <property type="evidence" value="ECO:0007669"/>
    <property type="project" value="InterPro"/>
</dbReference>
<dbReference type="GO" id="GO:0019992">
    <property type="term" value="F:diacylglycerol binding"/>
    <property type="evidence" value="ECO:0000250"/>
    <property type="project" value="UniProtKB"/>
</dbReference>
<dbReference type="GO" id="GO:0005085">
    <property type="term" value="F:guanyl-nucleotide exchange factor activity"/>
    <property type="evidence" value="ECO:0000250"/>
    <property type="project" value="UniProtKB"/>
</dbReference>
<dbReference type="GO" id="GO:0008270">
    <property type="term" value="F:zinc ion binding"/>
    <property type="evidence" value="ECO:0007669"/>
    <property type="project" value="UniProtKB-KW"/>
</dbReference>
<dbReference type="GO" id="GO:0140367">
    <property type="term" value="P:antibacterial innate immune response"/>
    <property type="evidence" value="ECO:0000250"/>
    <property type="project" value="UniProtKB"/>
</dbReference>
<dbReference type="GO" id="GO:0030154">
    <property type="term" value="P:cell differentiation"/>
    <property type="evidence" value="ECO:0007669"/>
    <property type="project" value="UniProtKB-KW"/>
</dbReference>
<dbReference type="GO" id="GO:0007200">
    <property type="term" value="P:phospholipase C-activating G protein-coupled receptor signaling pathway"/>
    <property type="evidence" value="ECO:0000250"/>
    <property type="project" value="UniProtKB"/>
</dbReference>
<dbReference type="GO" id="GO:0002717">
    <property type="term" value="P:positive regulation of natural killer cell mediated immunity"/>
    <property type="evidence" value="ECO:0000250"/>
    <property type="project" value="UniProtKB"/>
</dbReference>
<dbReference type="GO" id="GO:0007265">
    <property type="term" value="P:Ras protein signal transduction"/>
    <property type="evidence" value="ECO:0000318"/>
    <property type="project" value="GO_Central"/>
</dbReference>
<dbReference type="CDD" id="cd00155">
    <property type="entry name" value="RasGEF"/>
    <property type="match status" value="1"/>
</dbReference>
<dbReference type="CDD" id="cd06224">
    <property type="entry name" value="REM"/>
    <property type="match status" value="1"/>
</dbReference>
<dbReference type="FunFam" id="1.20.870.10:FF:000009">
    <property type="entry name" value="RAS guanyl releasing protein 4"/>
    <property type="match status" value="1"/>
</dbReference>
<dbReference type="FunFam" id="3.30.60.20:FF:000037">
    <property type="entry name" value="RAS guanyl releasing protein 4"/>
    <property type="match status" value="1"/>
</dbReference>
<dbReference type="FunFam" id="1.10.840.10:FF:000003">
    <property type="entry name" value="Ras guanyl-releasing protein 3 isoform 1"/>
    <property type="match status" value="1"/>
</dbReference>
<dbReference type="Gene3D" id="3.30.60.20">
    <property type="match status" value="1"/>
</dbReference>
<dbReference type="Gene3D" id="1.10.238.10">
    <property type="entry name" value="EF-hand"/>
    <property type="match status" value="1"/>
</dbReference>
<dbReference type="Gene3D" id="1.10.840.10">
    <property type="entry name" value="Ras guanine-nucleotide exchange factors catalytic domain"/>
    <property type="match status" value="1"/>
</dbReference>
<dbReference type="Gene3D" id="1.20.870.10">
    <property type="entry name" value="Son of sevenless (SoS) protein Chain: S domain 1"/>
    <property type="match status" value="1"/>
</dbReference>
<dbReference type="InterPro" id="IPR046349">
    <property type="entry name" value="C1-like_sf"/>
</dbReference>
<dbReference type="InterPro" id="IPR002048">
    <property type="entry name" value="EF_hand_dom"/>
</dbReference>
<dbReference type="InterPro" id="IPR002219">
    <property type="entry name" value="PE/DAG-bd"/>
</dbReference>
<dbReference type="InterPro" id="IPR008937">
    <property type="entry name" value="Ras-like_GEF"/>
</dbReference>
<dbReference type="InterPro" id="IPR000651">
    <property type="entry name" value="Ras-like_Gua-exchang_fac_N"/>
</dbReference>
<dbReference type="InterPro" id="IPR023578">
    <property type="entry name" value="Ras_GEF_dom_sf"/>
</dbReference>
<dbReference type="InterPro" id="IPR001895">
    <property type="entry name" value="RASGEF_cat_dom"/>
</dbReference>
<dbReference type="InterPro" id="IPR036964">
    <property type="entry name" value="RASGEF_cat_dom_sf"/>
</dbReference>
<dbReference type="PANTHER" id="PTHR23113">
    <property type="entry name" value="GUANINE NUCLEOTIDE EXCHANGE FACTOR"/>
    <property type="match status" value="1"/>
</dbReference>
<dbReference type="PANTHER" id="PTHR23113:SF157">
    <property type="entry name" value="RAS GUANYL-RELEASING PROTEIN 4"/>
    <property type="match status" value="1"/>
</dbReference>
<dbReference type="Pfam" id="PF00130">
    <property type="entry name" value="C1_1"/>
    <property type="match status" value="1"/>
</dbReference>
<dbReference type="Pfam" id="PF00617">
    <property type="entry name" value="RasGEF"/>
    <property type="match status" value="1"/>
</dbReference>
<dbReference type="SMART" id="SM00109">
    <property type="entry name" value="C1"/>
    <property type="match status" value="1"/>
</dbReference>
<dbReference type="SMART" id="SM00147">
    <property type="entry name" value="RasGEF"/>
    <property type="match status" value="1"/>
</dbReference>
<dbReference type="SUPFAM" id="SSF57889">
    <property type="entry name" value="Cysteine-rich domain"/>
    <property type="match status" value="1"/>
</dbReference>
<dbReference type="SUPFAM" id="SSF48366">
    <property type="entry name" value="Ras GEF"/>
    <property type="match status" value="1"/>
</dbReference>
<dbReference type="PROSITE" id="PS50222">
    <property type="entry name" value="EF_HAND_2"/>
    <property type="match status" value="1"/>
</dbReference>
<dbReference type="PROSITE" id="PS50009">
    <property type="entry name" value="RASGEF_CAT"/>
    <property type="match status" value="1"/>
</dbReference>
<dbReference type="PROSITE" id="PS50212">
    <property type="entry name" value="RASGEF_NTER"/>
    <property type="match status" value="1"/>
</dbReference>
<dbReference type="PROSITE" id="PS50081">
    <property type="entry name" value="ZF_DAG_PE_2"/>
    <property type="match status" value="1"/>
</dbReference>
<gene>
    <name type="primary">Rasgrp4</name>
</gene>
<sequence length="678" mass="75405">MNRKDIKRKSHQECSGKAGGHGRPRQARRHKTCPTPREISKVMASLNLGVLSESSCSVDELLEECIRCFDSAGSLHRGDHILKMVLTMHSWVLPSSDLAARLLTSYQKAAKDARELRQLQICYLVRYWLTHHPEVVHQEPQLEAIINRFWTTVAQEGNMAQRSLGDASNLLSPGGPGPPPLMSSPGLGKKRKVSLLFDHLETEELAQHLTYLEFRSFQAITPQDLRGYVLQGSVRGCPALEGSVGLSNSVSRWVQVMVLSRPGPAQRAQVLDKFIRVAQRLRQMQNFNTLMAVTGGLCHSAISRLKDSHVHLSPDSTKALLELTELLSSHNNYAYYRRTWASCTDFRLPVLGVHLKDLVSLYEAHPDRLPDGRLHLPKLNSLYLRLQELAALQRQHPPCSANEDLLHLLTLSLDLFYTEDEIYELSYAREPRCPKSLPLSPFKAPVVVEWAHGVTPKPDSATLGQHVEQLVESVFKNYDPEGHGSISLEDFEKLSANFPFACHGLHPPPRHGSGSFSREELTKYLLHASAICSKLGLAFLHAFQEVTFRKPTFCHSCNGFVSTGPLWGVTKRGYRCQDCGLCCHRHCRDQVRVECKKRPETKGDPGPPGAPGPATPLPPTGCGSEEGLSYTLSPHLESGCHLHHAWTQTESSHSSWEPEMVPCPAPVLPSKASSKSSV</sequence>
<proteinExistence type="evidence at protein level"/>
<comment type="function">
    <text evidence="2 10">Functions as a cation- and diacylglycerol (DAG)-regulated nucleotide exchange factor activating Ras through the exchange of bound GDP for GTP (PubMed:12493770). In neutrophils, participates in a phospholipase C-activating N-formyl peptide-activated GPCR (G protein-coupled receptor) signaling pathway by promoting Ras-mediated activation of PIK3CG/PI3Kgamma to promote neutrophil functional responses (By similarity). In CD117(+) dendritic cells and mast cells, participates in an lipopolysaccharide (LPS)-activated signaling pathway that stimulates the production of interferon-gamma and other pro-inflammatory cytokines by natural killer (NK) cells (By similarity). May function in mast cell differentiation (PubMed:12493770). Does not appear to be required for the development of B-cells, DC-cells, T-cells, or NK-cells (By similarity).</text>
</comment>
<comment type="subcellular location">
    <subcellularLocation>
        <location evidence="3">Cytoplasm</location>
    </subcellularLocation>
    <subcellularLocation>
        <location evidence="3">Cell membrane</location>
    </subcellularLocation>
    <text evidence="2">Recruited to membranes upon activation by DAG.</text>
</comment>
<comment type="tissue specificity">
    <text evidence="9">Expressed by mast cells and their progenitors (at protein level).</text>
</comment>
<comment type="domain">
    <text evidence="1">The phorbol-ester/DAG-type zinc finger mediates the binding and the functional activation by DAG.</text>
</comment>
<comment type="similarity">
    <text evidence="11">Belongs to the RASGRP family.</text>
</comment>
<keyword id="KW-0106">Calcium</keyword>
<keyword id="KW-1003">Cell membrane</keyword>
<keyword id="KW-0963">Cytoplasm</keyword>
<keyword id="KW-0221">Differentiation</keyword>
<keyword id="KW-0344">Guanine-nucleotide releasing factor</keyword>
<keyword id="KW-0446">Lipid-binding</keyword>
<keyword id="KW-0472">Membrane</keyword>
<keyword id="KW-0479">Metal-binding</keyword>
<keyword id="KW-1185">Reference proteome</keyword>
<keyword id="KW-0862">Zinc</keyword>
<keyword id="KW-0863">Zinc-finger</keyword>
<organism>
    <name type="scientific">Rattus norvegicus</name>
    <name type="common">Rat</name>
    <dbReference type="NCBI Taxonomy" id="10116"/>
    <lineage>
        <taxon>Eukaryota</taxon>
        <taxon>Metazoa</taxon>
        <taxon>Chordata</taxon>
        <taxon>Craniata</taxon>
        <taxon>Vertebrata</taxon>
        <taxon>Euteleostomi</taxon>
        <taxon>Mammalia</taxon>
        <taxon>Eutheria</taxon>
        <taxon>Euarchontoglires</taxon>
        <taxon>Glires</taxon>
        <taxon>Rodentia</taxon>
        <taxon>Myomorpha</taxon>
        <taxon>Muroidea</taxon>
        <taxon>Muridae</taxon>
        <taxon>Murinae</taxon>
        <taxon>Rattus</taxon>
    </lineage>
</organism>